<reference key="1">
    <citation type="journal article" date="1998" name="Biochim. Biophys. Acta">
        <title>Human MAFA has alternatively spliced variants.</title>
        <authorList>
            <person name="Lamers M.B.A.C."/>
            <person name="Lamont A.G."/>
            <person name="Williams D.H."/>
        </authorList>
    </citation>
    <scope>NUCLEOTIDE SEQUENCE [MRNA] (ISOFORM 2)</scope>
</reference>
<reference key="2">
    <citation type="journal article" date="1998" name="Eur. J. Immunol.">
        <title>MAFA-L, an ITIM-containing receptor encoded by the human NK cell gene complex and expressed by basophils and NK cells.</title>
        <authorList>
            <person name="Butcher S."/>
            <person name="Arney K.L."/>
            <person name="Cook G.P."/>
        </authorList>
    </citation>
    <scope>NUCLEOTIDE SEQUENCE [MRNA] (ISOFORM 2)</scope>
    <scope>TISSUE SPECIFICITY</scope>
</reference>
<reference key="3">
    <citation type="journal article" date="2004" name="Nat. Genet.">
        <title>Complete sequencing and characterization of 21,243 full-length human cDNAs.</title>
        <authorList>
            <person name="Ota T."/>
            <person name="Suzuki Y."/>
            <person name="Nishikawa T."/>
            <person name="Otsuki T."/>
            <person name="Sugiyama T."/>
            <person name="Irie R."/>
            <person name="Wakamatsu A."/>
            <person name="Hayashi K."/>
            <person name="Sato H."/>
            <person name="Nagai K."/>
            <person name="Kimura K."/>
            <person name="Makita H."/>
            <person name="Sekine M."/>
            <person name="Obayashi M."/>
            <person name="Nishi T."/>
            <person name="Shibahara T."/>
            <person name="Tanaka T."/>
            <person name="Ishii S."/>
            <person name="Yamamoto J."/>
            <person name="Saito K."/>
            <person name="Kawai Y."/>
            <person name="Isono Y."/>
            <person name="Nakamura Y."/>
            <person name="Nagahari K."/>
            <person name="Murakami K."/>
            <person name="Yasuda T."/>
            <person name="Iwayanagi T."/>
            <person name="Wagatsuma M."/>
            <person name="Shiratori A."/>
            <person name="Sudo H."/>
            <person name="Hosoiri T."/>
            <person name="Kaku Y."/>
            <person name="Kodaira H."/>
            <person name="Kondo H."/>
            <person name="Sugawara M."/>
            <person name="Takahashi M."/>
            <person name="Kanda K."/>
            <person name="Yokoi T."/>
            <person name="Furuya T."/>
            <person name="Kikkawa E."/>
            <person name="Omura Y."/>
            <person name="Abe K."/>
            <person name="Kamihara K."/>
            <person name="Katsuta N."/>
            <person name="Sato K."/>
            <person name="Tanikawa M."/>
            <person name="Yamazaki M."/>
            <person name="Ninomiya K."/>
            <person name="Ishibashi T."/>
            <person name="Yamashita H."/>
            <person name="Murakawa K."/>
            <person name="Fujimori K."/>
            <person name="Tanai H."/>
            <person name="Kimata M."/>
            <person name="Watanabe M."/>
            <person name="Hiraoka S."/>
            <person name="Chiba Y."/>
            <person name="Ishida S."/>
            <person name="Ono Y."/>
            <person name="Takiguchi S."/>
            <person name="Watanabe S."/>
            <person name="Yosida M."/>
            <person name="Hotuta T."/>
            <person name="Kusano J."/>
            <person name="Kanehori K."/>
            <person name="Takahashi-Fujii A."/>
            <person name="Hara H."/>
            <person name="Tanase T.-O."/>
            <person name="Nomura Y."/>
            <person name="Togiya S."/>
            <person name="Komai F."/>
            <person name="Hara R."/>
            <person name="Takeuchi K."/>
            <person name="Arita M."/>
            <person name="Imose N."/>
            <person name="Musashino K."/>
            <person name="Yuuki H."/>
            <person name="Oshima A."/>
            <person name="Sasaki N."/>
            <person name="Aotsuka S."/>
            <person name="Yoshikawa Y."/>
            <person name="Matsunawa H."/>
            <person name="Ichihara T."/>
            <person name="Shiohata N."/>
            <person name="Sano S."/>
            <person name="Moriya S."/>
            <person name="Momiyama H."/>
            <person name="Satoh N."/>
            <person name="Takami S."/>
            <person name="Terashima Y."/>
            <person name="Suzuki O."/>
            <person name="Nakagawa S."/>
            <person name="Senoh A."/>
            <person name="Mizoguchi H."/>
            <person name="Goto Y."/>
            <person name="Shimizu F."/>
            <person name="Wakebe H."/>
            <person name="Hishigaki H."/>
            <person name="Watanabe T."/>
            <person name="Sugiyama A."/>
            <person name="Takemoto M."/>
            <person name="Kawakami B."/>
            <person name="Yamazaki M."/>
            <person name="Watanabe K."/>
            <person name="Kumagai A."/>
            <person name="Itakura S."/>
            <person name="Fukuzumi Y."/>
            <person name="Fujimori Y."/>
            <person name="Komiyama M."/>
            <person name="Tashiro H."/>
            <person name="Tanigami A."/>
            <person name="Fujiwara T."/>
            <person name="Ono T."/>
            <person name="Yamada K."/>
            <person name="Fujii Y."/>
            <person name="Ozaki K."/>
            <person name="Hirao M."/>
            <person name="Ohmori Y."/>
            <person name="Kawabata A."/>
            <person name="Hikiji T."/>
            <person name="Kobatake N."/>
            <person name="Inagaki H."/>
            <person name="Ikema Y."/>
            <person name="Okamoto S."/>
            <person name="Okitani R."/>
            <person name="Kawakami T."/>
            <person name="Noguchi S."/>
            <person name="Itoh T."/>
            <person name="Shigeta K."/>
            <person name="Senba T."/>
            <person name="Matsumura K."/>
            <person name="Nakajima Y."/>
            <person name="Mizuno T."/>
            <person name="Morinaga M."/>
            <person name="Sasaki M."/>
            <person name="Togashi T."/>
            <person name="Oyama M."/>
            <person name="Hata H."/>
            <person name="Watanabe M."/>
            <person name="Komatsu T."/>
            <person name="Mizushima-Sugano J."/>
            <person name="Satoh T."/>
            <person name="Shirai Y."/>
            <person name="Takahashi Y."/>
            <person name="Nakagawa K."/>
            <person name="Okumura K."/>
            <person name="Nagase T."/>
            <person name="Nomura N."/>
            <person name="Kikuchi H."/>
            <person name="Masuho Y."/>
            <person name="Yamashita R."/>
            <person name="Nakai K."/>
            <person name="Yada T."/>
            <person name="Nakamura Y."/>
            <person name="Ohara O."/>
            <person name="Isogai T."/>
            <person name="Sugano S."/>
        </authorList>
    </citation>
    <scope>NUCLEOTIDE SEQUENCE [LARGE SCALE MRNA] (ISOFORM 2)</scope>
    <source>
        <tissue>Spleen</tissue>
    </source>
</reference>
<reference key="4">
    <citation type="submission" date="2005-09" db="EMBL/GenBank/DDBJ databases">
        <authorList>
            <person name="Mural R.J."/>
            <person name="Istrail S."/>
            <person name="Sutton G.G."/>
            <person name="Florea L."/>
            <person name="Halpern A.L."/>
            <person name="Mobarry C.M."/>
            <person name="Lippert R."/>
            <person name="Walenz B."/>
            <person name="Shatkay H."/>
            <person name="Dew I."/>
            <person name="Miller J.R."/>
            <person name="Flanigan M.J."/>
            <person name="Edwards N.J."/>
            <person name="Bolanos R."/>
            <person name="Fasulo D."/>
            <person name="Halldorsson B.V."/>
            <person name="Hannenhalli S."/>
            <person name="Turner R."/>
            <person name="Yooseph S."/>
            <person name="Lu F."/>
            <person name="Nusskern D.R."/>
            <person name="Shue B.C."/>
            <person name="Zheng X.H."/>
            <person name="Zhong F."/>
            <person name="Delcher A.L."/>
            <person name="Huson D.H."/>
            <person name="Kravitz S.A."/>
            <person name="Mouchard L."/>
            <person name="Reinert K."/>
            <person name="Remington K.A."/>
            <person name="Clark A.G."/>
            <person name="Waterman M.S."/>
            <person name="Eichler E.E."/>
            <person name="Adams M.D."/>
            <person name="Hunkapiller M.W."/>
            <person name="Myers E.W."/>
            <person name="Venter J.C."/>
        </authorList>
    </citation>
    <scope>NUCLEOTIDE SEQUENCE [LARGE SCALE GENOMIC DNA]</scope>
</reference>
<reference key="5">
    <citation type="journal article" date="2004" name="Genome Res.">
        <title>The status, quality, and expansion of the NIH full-length cDNA project: the Mammalian Gene Collection (MGC).</title>
        <authorList>
            <consortium name="The MGC Project Team"/>
        </authorList>
    </citation>
    <scope>NUCLEOTIDE SEQUENCE [LARGE SCALE MRNA] (ISOFORM 1)</scope>
    <source>
        <tissue>Bone marrow</tissue>
    </source>
</reference>
<reference key="6">
    <citation type="journal article" date="2005" name="J. Immunol.">
        <title>Expression of killer cell lectin-like receptor G1 on antigen-specific human CD8+ T lymphocytes during active, latent, and resolved infection and its relation with CD57.</title>
        <authorList>
            <person name="Ibegbu C.C."/>
            <person name="Xu Y.X."/>
            <person name="Harris W."/>
            <person name="Maggio D."/>
            <person name="Miller J.D."/>
            <person name="Kourtis A.P."/>
        </authorList>
    </citation>
    <scope>TISSUE SPECIFICITY</scope>
    <scope>INDUCTION BY VIRUSES AND PATHOGENS INFECTIONS</scope>
</reference>
<reference key="7">
    <citation type="journal article" date="2007" name="J. Immunol.">
        <title>Tumor-associated E-cadherin mutations affect binding to the killer cell lectin-like receptor G1 in humans.</title>
        <authorList>
            <person name="Schwartzkopff S."/>
            <person name="Gruendemann C."/>
            <person name="Schweier O."/>
            <person name="Rosshart S."/>
            <person name="Karjalainen K.E."/>
            <person name="Becker K.-F."/>
            <person name="Pircher H."/>
        </authorList>
    </citation>
    <scope>LIGAND-BINDING</scope>
</reference>
<reference key="8">
    <citation type="journal article" date="2009" name="Immunity">
        <title>Structure of natural killer cell receptor KLRG1 bound to E-cadherin reveals basis for MHC-independent missing self recognition.</title>
        <authorList>
            <person name="Li Y."/>
            <person name="Hofmann M."/>
            <person name="Wang Q."/>
            <person name="Teng L."/>
            <person name="Chlewicki L.K."/>
            <person name="Pircher H."/>
            <person name="Mariuzza R.A."/>
        </authorList>
    </citation>
    <scope>X-RAY CRYSTALLOGRAPHY (1.8 ANGSTROMS) OF 75-186 IN COMPLEX WITH CDH1</scope>
    <scope>FUNCTION</scope>
    <scope>SUBCELLULAR LOCATION</scope>
    <scope>DISULFIDE BONDS</scope>
</reference>
<organism>
    <name type="scientific">Homo sapiens</name>
    <name type="common">Human</name>
    <dbReference type="NCBI Taxonomy" id="9606"/>
    <lineage>
        <taxon>Eukaryota</taxon>
        <taxon>Metazoa</taxon>
        <taxon>Chordata</taxon>
        <taxon>Craniata</taxon>
        <taxon>Vertebrata</taxon>
        <taxon>Euteleostomi</taxon>
        <taxon>Mammalia</taxon>
        <taxon>Eutheria</taxon>
        <taxon>Euarchontoglires</taxon>
        <taxon>Primates</taxon>
        <taxon>Haplorrhini</taxon>
        <taxon>Catarrhini</taxon>
        <taxon>Hominidae</taxon>
        <taxon>Homo</taxon>
    </lineage>
</organism>
<proteinExistence type="evidence at protein level"/>
<keyword id="KW-0002">3D-structure</keyword>
<keyword id="KW-0025">Alternative splicing</keyword>
<keyword id="KW-1003">Cell membrane</keyword>
<keyword id="KW-1015">Disulfide bond</keyword>
<keyword id="KW-0325">Glycoprotein</keyword>
<keyword id="KW-0391">Immunity</keyword>
<keyword id="KW-0399">Innate immunity</keyword>
<keyword id="KW-0430">Lectin</keyword>
<keyword id="KW-0472">Membrane</keyword>
<keyword id="KW-1267">Proteomics identification</keyword>
<keyword id="KW-0675">Receptor</keyword>
<keyword id="KW-1185">Reference proteome</keyword>
<keyword id="KW-0735">Signal-anchor</keyword>
<keyword id="KW-0812">Transmembrane</keyword>
<keyword id="KW-1133">Transmembrane helix</keyword>
<dbReference type="EMBL" id="AF034952">
    <property type="protein sequence ID" value="AAC34731.1"/>
    <property type="molecule type" value="mRNA"/>
</dbReference>
<dbReference type="EMBL" id="AF081675">
    <property type="protein sequence ID" value="AAC32200.1"/>
    <property type="molecule type" value="mRNA"/>
</dbReference>
<dbReference type="EMBL" id="AF097358">
    <property type="protein sequence ID" value="AAD03719.1"/>
    <property type="molecule type" value="mRNA"/>
</dbReference>
<dbReference type="EMBL" id="AK316337">
    <property type="protein sequence ID" value="BAH14708.1"/>
    <property type="molecule type" value="mRNA"/>
</dbReference>
<dbReference type="EMBL" id="CH471116">
    <property type="protein sequence ID" value="EAW88594.1"/>
    <property type="molecule type" value="Genomic_DNA"/>
</dbReference>
<dbReference type="EMBL" id="CH471116">
    <property type="protein sequence ID" value="EAW88595.1"/>
    <property type="molecule type" value="Genomic_DNA"/>
</dbReference>
<dbReference type="EMBL" id="BC012621">
    <property type="protein sequence ID" value="AAH12621.1"/>
    <property type="molecule type" value="mRNA"/>
</dbReference>
<dbReference type="CCDS" id="CCDS8599.1">
    <molecule id="Q96E93-2"/>
</dbReference>
<dbReference type="CCDS" id="CCDS86277.1">
    <molecule id="Q96E93-1"/>
</dbReference>
<dbReference type="RefSeq" id="NP_001316028.1">
    <molecule id="Q96E93-1"/>
    <property type="nucleotide sequence ID" value="NM_001329099.2"/>
</dbReference>
<dbReference type="RefSeq" id="NP_005801.3">
    <molecule id="Q96E93-2"/>
    <property type="nucleotide sequence ID" value="NM_005810.3"/>
</dbReference>
<dbReference type="PDB" id="3FF7">
    <property type="method" value="X-ray"/>
    <property type="resolution" value="1.80 A"/>
    <property type="chains" value="C/D=75-186"/>
</dbReference>
<dbReference type="PDBsum" id="3FF7"/>
<dbReference type="SMR" id="Q96E93"/>
<dbReference type="BioGRID" id="115514">
    <property type="interactions" value="7"/>
</dbReference>
<dbReference type="FunCoup" id="Q96E93">
    <property type="interactions" value="148"/>
</dbReference>
<dbReference type="IntAct" id="Q96E93">
    <property type="interactions" value="9"/>
</dbReference>
<dbReference type="STRING" id="9606.ENSP00000266551"/>
<dbReference type="GlyCosmos" id="Q96E93">
    <property type="glycosylation" value="4 sites, No reported glycans"/>
</dbReference>
<dbReference type="GlyGen" id="Q96E93">
    <property type="glycosylation" value="5 sites, 1 O-linked glycan (1 site)"/>
</dbReference>
<dbReference type="iPTMnet" id="Q96E93"/>
<dbReference type="PhosphoSitePlus" id="Q96E93"/>
<dbReference type="BioMuta" id="KLRG1"/>
<dbReference type="DMDM" id="74731536"/>
<dbReference type="MassIVE" id="Q96E93"/>
<dbReference type="PaxDb" id="9606-ENSP00000349477"/>
<dbReference type="PeptideAtlas" id="Q96E93"/>
<dbReference type="Antibodypedia" id="23119">
    <property type="antibodies" value="453 antibodies from 35 providers"/>
</dbReference>
<dbReference type="DNASU" id="10219"/>
<dbReference type="Ensembl" id="ENST00000266551.8">
    <molecule id="Q96E93-1"/>
    <property type="protein sequence ID" value="ENSP00000266551.4"/>
    <property type="gene ID" value="ENSG00000139187.10"/>
</dbReference>
<dbReference type="Ensembl" id="ENST00000356986.8">
    <molecule id="Q96E93-2"/>
    <property type="protein sequence ID" value="ENSP00000349477.3"/>
    <property type="gene ID" value="ENSG00000139187.10"/>
</dbReference>
<dbReference type="GeneID" id="10219"/>
<dbReference type="KEGG" id="hsa:10219"/>
<dbReference type="MANE-Select" id="ENST00000356986.8">
    <molecule id="Q96E93-2"/>
    <property type="protein sequence ID" value="ENSP00000349477.3"/>
    <property type="RefSeq nucleotide sequence ID" value="NM_005810.4"/>
    <property type="RefSeq protein sequence ID" value="NP_005801.3"/>
</dbReference>
<dbReference type="UCSC" id="uc001qvg.4">
    <molecule id="Q96E93-1"/>
    <property type="organism name" value="human"/>
</dbReference>
<dbReference type="AGR" id="HGNC:6380"/>
<dbReference type="CTD" id="10219"/>
<dbReference type="DisGeNET" id="10219"/>
<dbReference type="GeneCards" id="KLRG1"/>
<dbReference type="HGNC" id="HGNC:6380">
    <property type="gene designation" value="KLRG1"/>
</dbReference>
<dbReference type="HPA" id="ENSG00000139187">
    <property type="expression patterns" value="Tissue enhanced (lymphoid)"/>
</dbReference>
<dbReference type="MIM" id="604874">
    <property type="type" value="gene"/>
</dbReference>
<dbReference type="neXtProt" id="NX_Q96E93"/>
<dbReference type="OpenTargets" id="ENSG00000139187"/>
<dbReference type="PharmGKB" id="PA30170"/>
<dbReference type="VEuPathDB" id="HostDB:ENSG00000139187"/>
<dbReference type="eggNOG" id="KOG4297">
    <property type="taxonomic scope" value="Eukaryota"/>
</dbReference>
<dbReference type="GeneTree" id="ENSGT00940000156296"/>
<dbReference type="HOGENOM" id="CLU_049894_8_3_1"/>
<dbReference type="InParanoid" id="Q96E93"/>
<dbReference type="OMA" id="SCPDFWM"/>
<dbReference type="OrthoDB" id="6133475at2759"/>
<dbReference type="PAN-GO" id="Q96E93">
    <property type="GO annotations" value="0 GO annotations based on evolutionary models"/>
</dbReference>
<dbReference type="PhylomeDB" id="Q96E93"/>
<dbReference type="TreeFam" id="TF336674"/>
<dbReference type="PathwayCommons" id="Q96E93"/>
<dbReference type="Reactome" id="R-HSA-198933">
    <property type="pathway name" value="Immunoregulatory interactions between a Lymphoid and a non-Lymphoid cell"/>
</dbReference>
<dbReference type="SignaLink" id="Q96E93"/>
<dbReference type="BioGRID-ORCS" id="10219">
    <property type="hits" value="11 hits in 1146 CRISPR screens"/>
</dbReference>
<dbReference type="ChiTaRS" id="KLRG1">
    <property type="organism name" value="human"/>
</dbReference>
<dbReference type="EvolutionaryTrace" id="Q96E93"/>
<dbReference type="GeneWiki" id="KLRG1"/>
<dbReference type="GenomeRNAi" id="10219"/>
<dbReference type="Pharos" id="Q96E93">
    <property type="development level" value="Tbio"/>
</dbReference>
<dbReference type="PRO" id="PR:Q96E93"/>
<dbReference type="Proteomes" id="UP000005640">
    <property type="component" value="Chromosome 12"/>
</dbReference>
<dbReference type="RNAct" id="Q96E93">
    <property type="molecule type" value="protein"/>
</dbReference>
<dbReference type="Bgee" id="ENSG00000139187">
    <property type="expression patterns" value="Expressed in granulocyte and 107 other cell types or tissues"/>
</dbReference>
<dbReference type="ExpressionAtlas" id="Q96E93">
    <property type="expression patterns" value="baseline and differential"/>
</dbReference>
<dbReference type="GO" id="GO:0043231">
    <property type="term" value="C:intracellular membrane-bounded organelle"/>
    <property type="evidence" value="ECO:0000314"/>
    <property type="project" value="HPA"/>
</dbReference>
<dbReference type="GO" id="GO:0016020">
    <property type="term" value="C:membrane"/>
    <property type="evidence" value="ECO:0000304"/>
    <property type="project" value="ProtInc"/>
</dbReference>
<dbReference type="GO" id="GO:0005886">
    <property type="term" value="C:plasma membrane"/>
    <property type="evidence" value="ECO:0007669"/>
    <property type="project" value="UniProtKB-SubCell"/>
</dbReference>
<dbReference type="GO" id="GO:0030246">
    <property type="term" value="F:carbohydrate binding"/>
    <property type="evidence" value="ECO:0000304"/>
    <property type="project" value="ProtInc"/>
</dbReference>
<dbReference type="GO" id="GO:0038023">
    <property type="term" value="F:signaling receptor activity"/>
    <property type="evidence" value="ECO:0000304"/>
    <property type="project" value="ProtInc"/>
</dbReference>
<dbReference type="GO" id="GO:0007166">
    <property type="term" value="P:cell surface receptor signaling pathway"/>
    <property type="evidence" value="ECO:0000304"/>
    <property type="project" value="ProtInc"/>
</dbReference>
<dbReference type="GO" id="GO:0006968">
    <property type="term" value="P:cellular defense response"/>
    <property type="evidence" value="ECO:0000304"/>
    <property type="project" value="ProtInc"/>
</dbReference>
<dbReference type="GO" id="GO:0006954">
    <property type="term" value="P:inflammatory response"/>
    <property type="evidence" value="ECO:0000304"/>
    <property type="project" value="ProtInc"/>
</dbReference>
<dbReference type="GO" id="GO:0045087">
    <property type="term" value="P:innate immune response"/>
    <property type="evidence" value="ECO:0007669"/>
    <property type="project" value="UniProtKB-KW"/>
</dbReference>
<dbReference type="CDD" id="cd03593">
    <property type="entry name" value="CLECT_NK_receptors_like"/>
    <property type="match status" value="1"/>
</dbReference>
<dbReference type="Gene3D" id="3.10.100.10">
    <property type="entry name" value="Mannose-Binding Protein A, subunit A"/>
    <property type="match status" value="1"/>
</dbReference>
<dbReference type="InterPro" id="IPR001304">
    <property type="entry name" value="C-type_lectin-like"/>
</dbReference>
<dbReference type="InterPro" id="IPR016186">
    <property type="entry name" value="C-type_lectin-like/link_sf"/>
</dbReference>
<dbReference type="InterPro" id="IPR016187">
    <property type="entry name" value="CTDL_fold"/>
</dbReference>
<dbReference type="InterPro" id="IPR042190">
    <property type="entry name" value="KLRG1"/>
</dbReference>
<dbReference type="InterPro" id="IPR033992">
    <property type="entry name" value="NKR-like_CTLD"/>
</dbReference>
<dbReference type="PANTHER" id="PTHR47648">
    <property type="entry name" value="KILLER CELL LECTIN-LIKE RECEPTOR SUBFAMILY G MEMBER 1"/>
    <property type="match status" value="1"/>
</dbReference>
<dbReference type="PANTHER" id="PTHR47648:SF1">
    <property type="entry name" value="KILLER CELL LECTIN-LIKE RECEPTOR SUBFAMILY G MEMBER 1"/>
    <property type="match status" value="1"/>
</dbReference>
<dbReference type="Pfam" id="PF00059">
    <property type="entry name" value="Lectin_C"/>
    <property type="match status" value="1"/>
</dbReference>
<dbReference type="SMART" id="SM00034">
    <property type="entry name" value="CLECT"/>
    <property type="match status" value="1"/>
</dbReference>
<dbReference type="SUPFAM" id="SSF56436">
    <property type="entry name" value="C-type lectin-like"/>
    <property type="match status" value="1"/>
</dbReference>
<dbReference type="PROSITE" id="PS50041">
    <property type="entry name" value="C_TYPE_LECTIN_2"/>
    <property type="match status" value="1"/>
</dbReference>
<protein>
    <recommendedName>
        <fullName>Killer cell lectin-like receptor subfamily G member 1</fullName>
    </recommendedName>
    <alternativeName>
        <fullName>C-type lectin domain family 15 member A</fullName>
    </alternativeName>
    <alternativeName>
        <fullName>ITIM-containing receptor MAFA-L</fullName>
    </alternativeName>
    <alternativeName>
        <fullName>MAFA-like receptor</fullName>
    </alternativeName>
    <alternativeName>
        <fullName>Mast cell function-associated antigen</fullName>
    </alternativeName>
</protein>
<name>KLRG1_HUMAN</name>
<comment type="function">
    <text evidence="5">Plays an inhibitory role on natural killer (NK) cells and T-cell functions upon binding to their non-MHC ligands. May mediate missing self recognition by binding to a highly conserved site on classical cadherins, enabling it to monitor expression of E-cadherin/CDH1, N-cadherin/CDH2 and R-cadherin/CDH4 on target cells.</text>
</comment>
<comment type="subunit">
    <text evidence="1">Forms a monomer and homodimer; disulfide-linked. Interacts (via ITIM motif) with PTPN11 and INPP5D.</text>
</comment>
<comment type="interaction">
    <interactant intactId="EBI-750770">
        <id>Q96E93</id>
    </interactant>
    <interactant intactId="EBI-11343438">
        <id>Q3SXY8</id>
        <label>ARL13B</label>
    </interactant>
    <organismsDiffer>false</organismsDiffer>
    <experiments>3</experiments>
</comment>
<comment type="interaction">
    <interactant intactId="EBI-750770">
        <id>Q96E93</id>
    </interactant>
    <interactant intactId="EBI-18076404">
        <id>O15529</id>
        <label>GPR42</label>
    </interactant>
    <organismsDiffer>false</organismsDiffer>
    <experiments>3</experiments>
</comment>
<comment type="interaction">
    <interactant intactId="EBI-750770">
        <id>Q96E93</id>
    </interactant>
    <interactant intactId="EBI-11721746">
        <id>Q8TED1</id>
        <label>GPX8</label>
    </interactant>
    <organismsDiffer>false</organismsDiffer>
    <experiments>3</experiments>
</comment>
<comment type="interaction">
    <interactant intactId="EBI-750770">
        <id>Q96E93</id>
    </interactant>
    <interactant intactId="EBI-9018187">
        <id>P26715</id>
        <label>KLRC1</label>
    </interactant>
    <organismsDiffer>false</organismsDiffer>
    <experiments>3</experiments>
</comment>
<comment type="interaction">
    <interactant intactId="EBI-750770">
        <id>Q96E93</id>
    </interactant>
    <interactant intactId="EBI-750776">
        <id>O95214</id>
        <label>LEPROTL1</label>
    </interactant>
    <organismsDiffer>false</organismsDiffer>
    <experiments>4</experiments>
</comment>
<comment type="interaction">
    <interactant intactId="EBI-750770">
        <id>Q96E93</id>
    </interactant>
    <interactant intactId="EBI-5454865">
        <id>Q6IN84</id>
        <label>MRM1</label>
    </interactant>
    <organismsDiffer>false</organismsDiffer>
    <experiments>3</experiments>
</comment>
<comment type="interaction">
    <interactant intactId="EBI-750770">
        <id>Q96E93</id>
    </interactant>
    <interactant intactId="EBI-716404">
        <id>P16284</id>
        <label>PECAM1</label>
    </interactant>
    <organismsDiffer>false</organismsDiffer>
    <experiments>3</experiments>
</comment>
<comment type="interaction">
    <interactant intactId="EBI-750770">
        <id>Q96E93</id>
    </interactant>
    <interactant intactId="EBI-7131783">
        <id>Q8N205</id>
        <label>SYNE4</label>
    </interactant>
    <organismsDiffer>false</organismsDiffer>
    <experiments>3</experiments>
</comment>
<comment type="interaction">
    <interactant intactId="EBI-750770">
        <id>Q96E93</id>
    </interactant>
    <interactant intactId="EBI-296151">
        <id>P37173</id>
        <label>TGFBR2</label>
    </interactant>
    <organismsDiffer>false</organismsDiffer>
    <experiments>3</experiments>
</comment>
<comment type="subcellular location">
    <subcellularLocation>
        <location evidence="5">Cell membrane</location>
        <topology evidence="5">Single-pass type II membrane protein</topology>
    </subcellularLocation>
</comment>
<comment type="alternative products">
    <event type="alternative splicing"/>
    <isoform>
        <id>Q96E93-1</id>
        <name>1</name>
        <sequence type="displayed"/>
    </isoform>
    <isoform>
        <id>Q96E93-2</id>
        <name>2</name>
        <sequence type="described" ref="VSP_033151"/>
    </isoform>
</comment>
<comment type="tissue specificity">
    <text evidence="4 6">Expressed specifically on natural killer (NK) cells and T-cells, mainly CD8 T-cells.</text>
</comment>
<comment type="induction">
    <text evidence="4">By pathogens and viruses infections.</text>
</comment>
<comment type="domain">
    <text evidence="1">Contains 1 copy of a cytoplasmic motif that is referred to as the immunoreceptor tyrosine-based inhibitor motif (ITIM). This motif is involved in modulation of cellular responses. Upon phosphorylation of ITIM motif KLRG1 associates with the two phosphatases PTPN11 and INPP5D (By similarity).</text>
</comment>
<evidence type="ECO:0000250" key="1"/>
<evidence type="ECO:0000255" key="2"/>
<evidence type="ECO:0000255" key="3">
    <source>
        <dbReference type="PROSITE-ProRule" id="PRU00040"/>
    </source>
</evidence>
<evidence type="ECO:0000269" key="4">
    <source>
    </source>
</evidence>
<evidence type="ECO:0000269" key="5">
    <source>
    </source>
</evidence>
<evidence type="ECO:0000269" key="6">
    <source>
    </source>
</evidence>
<evidence type="ECO:0000303" key="7">
    <source>
    </source>
</evidence>
<evidence type="ECO:0000303" key="8">
    <source>
    </source>
</evidence>
<evidence type="ECO:0000303" key="9">
    <source>
    </source>
</evidence>
<evidence type="ECO:0000305" key="10"/>
<evidence type="ECO:0007829" key="11">
    <source>
        <dbReference type="PDB" id="3FF7"/>
    </source>
</evidence>
<sequence>MTDSVIYSMLELPTATQAQNDYGPQQKSSSSRPSCSCLVAIALGLLTAVLLSVLLYQWILCQGSNYSTCASCPSCPDRWMKYGNHCYYFSVEEKDWNSSLEFCLARDSHLLVITDNQEMSLLQVFLSEAFCWIGLRNNSGWRWEDGSPLNFSRISSNSFVQTCGAINKNGLQASSCEVPLHWVCKKCPFADQALF</sequence>
<feature type="chain" id="PRO_0000331256" description="Killer cell lectin-like receptor subfamily G member 1">
    <location>
        <begin position="1"/>
        <end position="195"/>
    </location>
</feature>
<feature type="topological domain" description="Cytoplasmic" evidence="2">
    <location>
        <begin position="1"/>
        <end position="38"/>
    </location>
</feature>
<feature type="transmembrane region" description="Helical; Signal-anchor for type II membrane protein" evidence="2">
    <location>
        <begin position="39"/>
        <end position="59"/>
    </location>
</feature>
<feature type="topological domain" description="Extracellular" evidence="2">
    <location>
        <begin position="60"/>
        <end position="195"/>
    </location>
</feature>
<feature type="domain" description="C-type lectin" evidence="3">
    <location>
        <begin position="82"/>
        <end position="185"/>
    </location>
</feature>
<feature type="short sequence motif" description="ITIM motif">
    <location>
        <begin position="5"/>
        <end position="10"/>
    </location>
</feature>
<feature type="glycosylation site" description="N-linked (GlcNAc...) asparagine" evidence="2">
    <location>
        <position position="65"/>
    </location>
</feature>
<feature type="glycosylation site" description="N-linked (GlcNAc...) asparagine" evidence="2">
    <location>
        <position position="97"/>
    </location>
</feature>
<feature type="glycosylation site" description="N-linked (GlcNAc...) asparagine" evidence="2">
    <location>
        <position position="137"/>
    </location>
</feature>
<feature type="glycosylation site" description="N-linked (GlcNAc...) asparagine" evidence="2">
    <location>
        <position position="150"/>
    </location>
</feature>
<feature type="disulfide bond" evidence="3 5">
    <location>
        <begin position="75"/>
        <end position="86"/>
    </location>
</feature>
<feature type="disulfide bond" evidence="3 5">
    <location>
        <begin position="103"/>
        <end position="184"/>
    </location>
</feature>
<feature type="disulfide bond" evidence="3 5">
    <location>
        <begin position="163"/>
        <end position="176"/>
    </location>
</feature>
<feature type="splice variant" id="VSP_033151" description="In isoform 2." evidence="7 8 9">
    <original>CPFADQALF</original>
    <variation>VRL</variation>
    <location>
        <begin position="187"/>
        <end position="195"/>
    </location>
</feature>
<feature type="sequence variant" id="VAR_042750" description="In dbSNP:rs1805749.">
    <original>W</original>
    <variation>R</variation>
    <location>
        <position position="58"/>
    </location>
</feature>
<feature type="sequence conflict" description="In Ref. 1; AAC34731." evidence="10" ref="1">
    <original>R</original>
    <variation>K</variation>
    <location>
        <position position="32"/>
    </location>
</feature>
<feature type="sequence conflict" description="In Ref. 1; AAC34731." evidence="10" ref="1">
    <original>A</original>
    <variation>T</variation>
    <location>
        <position position="42"/>
    </location>
</feature>
<feature type="sequence conflict" description="In Ref. 1; AAC34731." evidence="10" ref="1">
    <original>W</original>
    <variation>G</variation>
    <location>
        <position position="182"/>
    </location>
</feature>
<feature type="strand" evidence="11">
    <location>
        <begin position="80"/>
        <end position="82"/>
    </location>
</feature>
<feature type="strand" evidence="11">
    <location>
        <begin position="85"/>
        <end position="89"/>
    </location>
</feature>
<feature type="helix" evidence="11">
    <location>
        <begin position="96"/>
        <end position="104"/>
    </location>
</feature>
<feature type="turn" evidence="11">
    <location>
        <begin position="105"/>
        <end position="107"/>
    </location>
</feature>
<feature type="helix" evidence="11">
    <location>
        <begin position="116"/>
        <end position="123"/>
    </location>
</feature>
<feature type="strand" evidence="11">
    <location>
        <begin position="131"/>
        <end position="143"/>
    </location>
</feature>
<feature type="strand" evidence="11">
    <location>
        <begin position="163"/>
        <end position="167"/>
    </location>
</feature>
<feature type="strand" evidence="11">
    <location>
        <begin position="170"/>
        <end position="174"/>
    </location>
</feature>
<feature type="strand" evidence="11">
    <location>
        <begin position="180"/>
        <end position="185"/>
    </location>
</feature>
<accession>Q96E93</accession>
<accession>B7ZAM2</accession>
<accession>O43198</accession>
<accession>O75613</accession>
<gene>
    <name type="primary">KLRG1</name>
    <name type="synonym">CLEC15A</name>
    <name type="synonym">MAFA</name>
    <name type="synonym">MAFAL</name>
</gene>